<feature type="chain" id="PRO_0000367171" description="UPF0173 metal-dependent hydrolase Caur_2542">
    <location>
        <begin position="1"/>
        <end position="243"/>
    </location>
</feature>
<gene>
    <name type="ordered locus">Caur_2542</name>
</gene>
<evidence type="ECO:0000255" key="1">
    <source>
        <dbReference type="HAMAP-Rule" id="MF_00457"/>
    </source>
</evidence>
<proteinExistence type="inferred from homology"/>
<reference key="1">
    <citation type="journal article" date="2011" name="BMC Genomics">
        <title>Complete genome sequence of the filamentous anoxygenic phototrophic bacterium Chloroflexus aurantiacus.</title>
        <authorList>
            <person name="Tang K.H."/>
            <person name="Barry K."/>
            <person name="Chertkov O."/>
            <person name="Dalin E."/>
            <person name="Han C.S."/>
            <person name="Hauser L.J."/>
            <person name="Honchak B.M."/>
            <person name="Karbach L.E."/>
            <person name="Land M.L."/>
            <person name="Lapidus A."/>
            <person name="Larimer F.W."/>
            <person name="Mikhailova N."/>
            <person name="Pitluck S."/>
            <person name="Pierson B.K."/>
            <person name="Blankenship R.E."/>
        </authorList>
    </citation>
    <scope>NUCLEOTIDE SEQUENCE [LARGE SCALE GENOMIC DNA]</scope>
    <source>
        <strain>ATCC 29366 / DSM 635 / J-10-fl</strain>
    </source>
</reference>
<accession>A9WI57</accession>
<name>Y2542_CHLAA</name>
<comment type="similarity">
    <text evidence="1">Belongs to the UPF0173 family.</text>
</comment>
<dbReference type="EMBL" id="CP000909">
    <property type="protein sequence ID" value="ABY35748.1"/>
    <property type="molecule type" value="Genomic_DNA"/>
</dbReference>
<dbReference type="RefSeq" id="WP_012258401.1">
    <property type="nucleotide sequence ID" value="NC_010175.1"/>
</dbReference>
<dbReference type="RefSeq" id="YP_001636137.1">
    <property type="nucleotide sequence ID" value="NC_010175.1"/>
</dbReference>
<dbReference type="SMR" id="A9WI57"/>
<dbReference type="FunCoup" id="A9WI57">
    <property type="interactions" value="31"/>
</dbReference>
<dbReference type="STRING" id="324602.Caur_2542"/>
<dbReference type="EnsemblBacteria" id="ABY35748">
    <property type="protein sequence ID" value="ABY35748"/>
    <property type="gene ID" value="Caur_2542"/>
</dbReference>
<dbReference type="KEGG" id="cau:Caur_2542"/>
<dbReference type="PATRIC" id="fig|324602.8.peg.2865"/>
<dbReference type="eggNOG" id="COG2220">
    <property type="taxonomic scope" value="Bacteria"/>
</dbReference>
<dbReference type="HOGENOM" id="CLU_070010_4_0_0"/>
<dbReference type="InParanoid" id="A9WI57"/>
<dbReference type="Proteomes" id="UP000002008">
    <property type="component" value="Chromosome"/>
</dbReference>
<dbReference type="GO" id="GO:0016787">
    <property type="term" value="F:hydrolase activity"/>
    <property type="evidence" value="ECO:0000318"/>
    <property type="project" value="GO_Central"/>
</dbReference>
<dbReference type="Gene3D" id="3.60.15.10">
    <property type="entry name" value="Ribonuclease Z/Hydroxyacylglutathione hydrolase-like"/>
    <property type="match status" value="1"/>
</dbReference>
<dbReference type="HAMAP" id="MF_00457">
    <property type="entry name" value="UPF0173"/>
    <property type="match status" value="1"/>
</dbReference>
<dbReference type="InterPro" id="IPR001279">
    <property type="entry name" value="Metallo-B-lactamas"/>
</dbReference>
<dbReference type="InterPro" id="IPR036866">
    <property type="entry name" value="RibonucZ/Hydroxyglut_hydro"/>
</dbReference>
<dbReference type="InterPro" id="IPR022877">
    <property type="entry name" value="UPF0173"/>
</dbReference>
<dbReference type="InterPro" id="IPR050114">
    <property type="entry name" value="UPF0173_UPF0282_UlaG_hydrolase"/>
</dbReference>
<dbReference type="NCBIfam" id="NF001911">
    <property type="entry name" value="PRK00685.1"/>
    <property type="match status" value="1"/>
</dbReference>
<dbReference type="PANTHER" id="PTHR43546:SF3">
    <property type="entry name" value="UPF0173 METAL-DEPENDENT HYDROLASE MJ1163"/>
    <property type="match status" value="1"/>
</dbReference>
<dbReference type="PANTHER" id="PTHR43546">
    <property type="entry name" value="UPF0173 METAL-DEPENDENT HYDROLASE MJ1163-RELATED"/>
    <property type="match status" value="1"/>
</dbReference>
<dbReference type="Pfam" id="PF12706">
    <property type="entry name" value="Lactamase_B_2"/>
    <property type="match status" value="1"/>
</dbReference>
<dbReference type="SMART" id="SM00849">
    <property type="entry name" value="Lactamase_B"/>
    <property type="match status" value="1"/>
</dbReference>
<dbReference type="SUPFAM" id="SSF56281">
    <property type="entry name" value="Metallo-hydrolase/oxidoreductase"/>
    <property type="match status" value="1"/>
</dbReference>
<keyword id="KW-0378">Hydrolase</keyword>
<keyword id="KW-1185">Reference proteome</keyword>
<organism>
    <name type="scientific">Chloroflexus aurantiacus (strain ATCC 29366 / DSM 635 / J-10-fl)</name>
    <dbReference type="NCBI Taxonomy" id="324602"/>
    <lineage>
        <taxon>Bacteria</taxon>
        <taxon>Bacillati</taxon>
        <taxon>Chloroflexota</taxon>
        <taxon>Chloroflexia</taxon>
        <taxon>Chloroflexales</taxon>
        <taxon>Chloroflexineae</taxon>
        <taxon>Chloroflexaceae</taxon>
        <taxon>Chloroflexus</taxon>
    </lineage>
</organism>
<sequence length="243" mass="26379">MATLGRNVTITLIGHGTFHLTTPEGRNILIDAWVDGNPVCPEPWKARVRENLAAIFVTHGHFDHIADLVDLARETGATVVCQYDMVPYLEGEGIPAAQLVGFNKGGTVTVADVRATMTTAHHSSTIYENGQIINLGTAAGYVLRFSNGFTVYHTGDTCVTMDMQIIGELYRPDLVILPIGDHFTMDPRQAAYALKLIGAKYAIPEHYGTFPILTGTPEALIEHCREFGVTTEVIALKPGESVS</sequence>
<protein>
    <recommendedName>
        <fullName evidence="1">UPF0173 metal-dependent hydrolase Caur_2542</fullName>
    </recommendedName>
</protein>